<sequence length="298" mass="32003">MTYRECVLEVARDDAEALSEALFDLGALSVSVEDADADTPDEEPLFGEPGHEPTRLAWNRSRVVALLGDDADPALLVAAAANAIGLSAAPAYTVREVEEQDWVRLTQSQFEPIHIGEHIWVVPSWHDAPQPEAVVLELDPGLAFGTGSHPTTRLCMEWLEQHVQPGERTLDYGCGSGILAIVAKKLGTGETVGVDIDPNAVEASRYNAERNRVEAGFSLPGDAPEGTFDLVVANILSNPLKLMASMLCARVRPGGRLVLSGVLERQAEDVAAAYADAIPLSVWRARDGWVCLHGVKPA</sequence>
<evidence type="ECO:0000255" key="1">
    <source>
        <dbReference type="HAMAP-Rule" id="MF_00735"/>
    </source>
</evidence>
<feature type="chain" id="PRO_0000192295" description="Ribosomal protein L11 methyltransferase">
    <location>
        <begin position="1"/>
        <end position="298"/>
    </location>
</feature>
<feature type="binding site" evidence="1">
    <location>
        <position position="152"/>
    </location>
    <ligand>
        <name>S-adenosyl-L-methionine</name>
        <dbReference type="ChEBI" id="CHEBI:59789"/>
    </ligand>
</feature>
<feature type="binding site" evidence="1">
    <location>
        <position position="173"/>
    </location>
    <ligand>
        <name>S-adenosyl-L-methionine</name>
        <dbReference type="ChEBI" id="CHEBI:59789"/>
    </ligand>
</feature>
<feature type="binding site" evidence="1">
    <location>
        <position position="195"/>
    </location>
    <ligand>
        <name>S-adenosyl-L-methionine</name>
        <dbReference type="ChEBI" id="CHEBI:59789"/>
    </ligand>
</feature>
<feature type="binding site" evidence="1">
    <location>
        <position position="234"/>
    </location>
    <ligand>
        <name>S-adenosyl-L-methionine</name>
        <dbReference type="ChEBI" id="CHEBI:59789"/>
    </ligand>
</feature>
<accession>Q8XVP2</accession>
<dbReference type="EC" id="2.1.1.-" evidence="1"/>
<dbReference type="EMBL" id="AL646052">
    <property type="protein sequence ID" value="CAD16495.1"/>
    <property type="molecule type" value="Genomic_DNA"/>
</dbReference>
<dbReference type="RefSeq" id="WP_011002695.1">
    <property type="nucleotide sequence ID" value="NC_003295.1"/>
</dbReference>
<dbReference type="SMR" id="Q8XVP2"/>
<dbReference type="STRING" id="267608.RSc2788"/>
<dbReference type="EnsemblBacteria" id="CAD16495">
    <property type="protein sequence ID" value="CAD16495"/>
    <property type="gene ID" value="RSc2788"/>
</dbReference>
<dbReference type="KEGG" id="rso:RSc2788"/>
<dbReference type="PATRIC" id="fig|267608.8.peg.2837"/>
<dbReference type="eggNOG" id="COG2264">
    <property type="taxonomic scope" value="Bacteria"/>
</dbReference>
<dbReference type="HOGENOM" id="CLU_049382_4_1_4"/>
<dbReference type="Proteomes" id="UP000001436">
    <property type="component" value="Chromosome"/>
</dbReference>
<dbReference type="GO" id="GO:0005829">
    <property type="term" value="C:cytosol"/>
    <property type="evidence" value="ECO:0007669"/>
    <property type="project" value="TreeGrafter"/>
</dbReference>
<dbReference type="GO" id="GO:0016279">
    <property type="term" value="F:protein-lysine N-methyltransferase activity"/>
    <property type="evidence" value="ECO:0007669"/>
    <property type="project" value="TreeGrafter"/>
</dbReference>
<dbReference type="GO" id="GO:0032259">
    <property type="term" value="P:methylation"/>
    <property type="evidence" value="ECO:0007669"/>
    <property type="project" value="UniProtKB-KW"/>
</dbReference>
<dbReference type="CDD" id="cd02440">
    <property type="entry name" value="AdoMet_MTases"/>
    <property type="match status" value="1"/>
</dbReference>
<dbReference type="Gene3D" id="3.40.50.150">
    <property type="entry name" value="Vaccinia Virus protein VP39"/>
    <property type="match status" value="1"/>
</dbReference>
<dbReference type="HAMAP" id="MF_00735">
    <property type="entry name" value="Methyltr_PrmA"/>
    <property type="match status" value="1"/>
</dbReference>
<dbReference type="InterPro" id="IPR050078">
    <property type="entry name" value="Ribosomal_L11_MeTrfase_PrmA"/>
</dbReference>
<dbReference type="InterPro" id="IPR004498">
    <property type="entry name" value="Ribosomal_PrmA_MeTrfase"/>
</dbReference>
<dbReference type="InterPro" id="IPR029063">
    <property type="entry name" value="SAM-dependent_MTases_sf"/>
</dbReference>
<dbReference type="NCBIfam" id="TIGR00406">
    <property type="entry name" value="prmA"/>
    <property type="match status" value="1"/>
</dbReference>
<dbReference type="PANTHER" id="PTHR43648">
    <property type="entry name" value="ELECTRON TRANSFER FLAVOPROTEIN BETA SUBUNIT LYSINE METHYLTRANSFERASE"/>
    <property type="match status" value="1"/>
</dbReference>
<dbReference type="PANTHER" id="PTHR43648:SF1">
    <property type="entry name" value="ELECTRON TRANSFER FLAVOPROTEIN BETA SUBUNIT LYSINE METHYLTRANSFERASE"/>
    <property type="match status" value="1"/>
</dbReference>
<dbReference type="Pfam" id="PF06325">
    <property type="entry name" value="PrmA"/>
    <property type="match status" value="1"/>
</dbReference>
<dbReference type="PIRSF" id="PIRSF000401">
    <property type="entry name" value="RPL11_MTase"/>
    <property type="match status" value="1"/>
</dbReference>
<dbReference type="SUPFAM" id="SSF53335">
    <property type="entry name" value="S-adenosyl-L-methionine-dependent methyltransferases"/>
    <property type="match status" value="1"/>
</dbReference>
<organism>
    <name type="scientific">Ralstonia nicotianae (strain ATCC BAA-1114 / GMI1000)</name>
    <name type="common">Ralstonia solanacearum</name>
    <dbReference type="NCBI Taxonomy" id="267608"/>
    <lineage>
        <taxon>Bacteria</taxon>
        <taxon>Pseudomonadati</taxon>
        <taxon>Pseudomonadota</taxon>
        <taxon>Betaproteobacteria</taxon>
        <taxon>Burkholderiales</taxon>
        <taxon>Burkholderiaceae</taxon>
        <taxon>Ralstonia</taxon>
        <taxon>Ralstonia solanacearum species complex</taxon>
    </lineage>
</organism>
<keyword id="KW-0963">Cytoplasm</keyword>
<keyword id="KW-0489">Methyltransferase</keyword>
<keyword id="KW-1185">Reference proteome</keyword>
<keyword id="KW-0949">S-adenosyl-L-methionine</keyword>
<keyword id="KW-0808">Transferase</keyword>
<reference key="1">
    <citation type="journal article" date="2002" name="Nature">
        <title>Genome sequence of the plant pathogen Ralstonia solanacearum.</title>
        <authorList>
            <person name="Salanoubat M."/>
            <person name="Genin S."/>
            <person name="Artiguenave F."/>
            <person name="Gouzy J."/>
            <person name="Mangenot S."/>
            <person name="Arlat M."/>
            <person name="Billault A."/>
            <person name="Brottier P."/>
            <person name="Camus J.-C."/>
            <person name="Cattolico L."/>
            <person name="Chandler M."/>
            <person name="Choisne N."/>
            <person name="Claudel-Renard C."/>
            <person name="Cunnac S."/>
            <person name="Demange N."/>
            <person name="Gaspin C."/>
            <person name="Lavie M."/>
            <person name="Moisan A."/>
            <person name="Robert C."/>
            <person name="Saurin W."/>
            <person name="Schiex T."/>
            <person name="Siguier P."/>
            <person name="Thebault P."/>
            <person name="Whalen M."/>
            <person name="Wincker P."/>
            <person name="Levy M."/>
            <person name="Weissenbach J."/>
            <person name="Boucher C.A."/>
        </authorList>
    </citation>
    <scope>NUCLEOTIDE SEQUENCE [LARGE SCALE GENOMIC DNA]</scope>
    <source>
        <strain>ATCC BAA-1114 / GMI1000</strain>
    </source>
</reference>
<name>PRMA_RALN1</name>
<proteinExistence type="inferred from homology"/>
<protein>
    <recommendedName>
        <fullName evidence="1">Ribosomal protein L11 methyltransferase</fullName>
        <shortName evidence="1">L11 Mtase</shortName>
        <ecNumber evidence="1">2.1.1.-</ecNumber>
    </recommendedName>
</protein>
<gene>
    <name evidence="1" type="primary">prmA</name>
    <name type="ordered locus">RSc2788</name>
    <name type="ORF">RS00059</name>
</gene>
<comment type="function">
    <text evidence="1">Methylates ribosomal protein L11.</text>
</comment>
<comment type="catalytic activity">
    <reaction evidence="1">
        <text>L-lysyl-[protein] + 3 S-adenosyl-L-methionine = N(6),N(6),N(6)-trimethyl-L-lysyl-[protein] + 3 S-adenosyl-L-homocysteine + 3 H(+)</text>
        <dbReference type="Rhea" id="RHEA:54192"/>
        <dbReference type="Rhea" id="RHEA-COMP:9752"/>
        <dbReference type="Rhea" id="RHEA-COMP:13826"/>
        <dbReference type="ChEBI" id="CHEBI:15378"/>
        <dbReference type="ChEBI" id="CHEBI:29969"/>
        <dbReference type="ChEBI" id="CHEBI:57856"/>
        <dbReference type="ChEBI" id="CHEBI:59789"/>
        <dbReference type="ChEBI" id="CHEBI:61961"/>
    </reaction>
</comment>
<comment type="subcellular location">
    <subcellularLocation>
        <location evidence="1">Cytoplasm</location>
    </subcellularLocation>
</comment>
<comment type="similarity">
    <text evidence="1">Belongs to the methyltransferase superfamily. PrmA family.</text>
</comment>